<organism>
    <name type="scientific">Macrococcus caseolyticus (strain JCSC5402)</name>
    <name type="common">Macrococcoides caseolyticum</name>
    <dbReference type="NCBI Taxonomy" id="458233"/>
    <lineage>
        <taxon>Bacteria</taxon>
        <taxon>Bacillati</taxon>
        <taxon>Bacillota</taxon>
        <taxon>Bacilli</taxon>
        <taxon>Bacillales</taxon>
        <taxon>Staphylococcaceae</taxon>
        <taxon>Macrococcoides</taxon>
    </lineage>
</organism>
<dbReference type="EC" id="2.1.1.182" evidence="1"/>
<dbReference type="EMBL" id="AP009484">
    <property type="protein sequence ID" value="BAH18626.1"/>
    <property type="molecule type" value="Genomic_DNA"/>
</dbReference>
<dbReference type="RefSeq" id="WP_015912418.1">
    <property type="nucleotide sequence ID" value="NC_011999.1"/>
</dbReference>
<dbReference type="SMR" id="B9E8V8"/>
<dbReference type="STRING" id="458233.MCCL_1919"/>
<dbReference type="KEGG" id="mcl:MCCL_1919"/>
<dbReference type="eggNOG" id="COG0030">
    <property type="taxonomic scope" value="Bacteria"/>
</dbReference>
<dbReference type="HOGENOM" id="CLU_041220_0_0_9"/>
<dbReference type="OrthoDB" id="9814755at2"/>
<dbReference type="Proteomes" id="UP000001383">
    <property type="component" value="Chromosome"/>
</dbReference>
<dbReference type="GO" id="GO:0005829">
    <property type="term" value="C:cytosol"/>
    <property type="evidence" value="ECO:0007669"/>
    <property type="project" value="TreeGrafter"/>
</dbReference>
<dbReference type="GO" id="GO:0052908">
    <property type="term" value="F:16S rRNA (adenine(1518)-N(6)/adenine(1519)-N(6))-dimethyltransferase activity"/>
    <property type="evidence" value="ECO:0007669"/>
    <property type="project" value="UniProtKB-EC"/>
</dbReference>
<dbReference type="GO" id="GO:0003723">
    <property type="term" value="F:RNA binding"/>
    <property type="evidence" value="ECO:0007669"/>
    <property type="project" value="UniProtKB-KW"/>
</dbReference>
<dbReference type="CDD" id="cd02440">
    <property type="entry name" value="AdoMet_MTases"/>
    <property type="match status" value="1"/>
</dbReference>
<dbReference type="FunFam" id="3.40.50.150:FF:000023">
    <property type="entry name" value="Ribosomal RNA small subunit methyltransferase A"/>
    <property type="match status" value="1"/>
</dbReference>
<dbReference type="Gene3D" id="1.10.8.100">
    <property type="entry name" value="Ribosomal RNA adenine dimethylase-like, domain 2"/>
    <property type="match status" value="1"/>
</dbReference>
<dbReference type="Gene3D" id="3.40.50.150">
    <property type="entry name" value="Vaccinia Virus protein VP39"/>
    <property type="match status" value="1"/>
</dbReference>
<dbReference type="HAMAP" id="MF_00607">
    <property type="entry name" value="16SrRNA_methyltr_A"/>
    <property type="match status" value="1"/>
</dbReference>
<dbReference type="InterPro" id="IPR001737">
    <property type="entry name" value="KsgA/Erm"/>
</dbReference>
<dbReference type="InterPro" id="IPR023165">
    <property type="entry name" value="rRNA_Ade_diMease-like_C"/>
</dbReference>
<dbReference type="InterPro" id="IPR020596">
    <property type="entry name" value="rRNA_Ade_Mease_Trfase_CS"/>
</dbReference>
<dbReference type="InterPro" id="IPR020598">
    <property type="entry name" value="rRNA_Ade_methylase_Trfase_N"/>
</dbReference>
<dbReference type="InterPro" id="IPR011530">
    <property type="entry name" value="rRNA_adenine_dimethylase"/>
</dbReference>
<dbReference type="InterPro" id="IPR029063">
    <property type="entry name" value="SAM-dependent_MTases_sf"/>
</dbReference>
<dbReference type="NCBIfam" id="TIGR00755">
    <property type="entry name" value="ksgA"/>
    <property type="match status" value="1"/>
</dbReference>
<dbReference type="PANTHER" id="PTHR11727">
    <property type="entry name" value="DIMETHYLADENOSINE TRANSFERASE"/>
    <property type="match status" value="1"/>
</dbReference>
<dbReference type="PANTHER" id="PTHR11727:SF7">
    <property type="entry name" value="DIMETHYLADENOSINE TRANSFERASE-RELATED"/>
    <property type="match status" value="1"/>
</dbReference>
<dbReference type="Pfam" id="PF00398">
    <property type="entry name" value="RrnaAD"/>
    <property type="match status" value="1"/>
</dbReference>
<dbReference type="SMART" id="SM00650">
    <property type="entry name" value="rADc"/>
    <property type="match status" value="1"/>
</dbReference>
<dbReference type="SUPFAM" id="SSF53335">
    <property type="entry name" value="S-adenosyl-L-methionine-dependent methyltransferases"/>
    <property type="match status" value="1"/>
</dbReference>
<dbReference type="PROSITE" id="PS01131">
    <property type="entry name" value="RRNA_A_DIMETH"/>
    <property type="match status" value="1"/>
</dbReference>
<dbReference type="PROSITE" id="PS51689">
    <property type="entry name" value="SAM_RNA_A_N6_MT"/>
    <property type="match status" value="1"/>
</dbReference>
<reference key="1">
    <citation type="journal article" date="2009" name="J. Bacteriol.">
        <title>Complete genome sequence of Macrococcus caseolyticus strain JCSCS5402, reflecting the ancestral genome of the human-pathogenic staphylococci.</title>
        <authorList>
            <person name="Baba T."/>
            <person name="Kuwahara-Arai K."/>
            <person name="Uchiyama I."/>
            <person name="Takeuchi F."/>
            <person name="Ito T."/>
            <person name="Hiramatsu K."/>
        </authorList>
    </citation>
    <scope>NUCLEOTIDE SEQUENCE [LARGE SCALE GENOMIC DNA]</scope>
    <source>
        <strain>JCSC5402</strain>
    </source>
</reference>
<accession>B9E8V8</accession>
<keyword id="KW-0963">Cytoplasm</keyword>
<keyword id="KW-0489">Methyltransferase</keyword>
<keyword id="KW-1185">Reference proteome</keyword>
<keyword id="KW-0694">RNA-binding</keyword>
<keyword id="KW-0698">rRNA processing</keyword>
<keyword id="KW-0949">S-adenosyl-L-methionine</keyword>
<keyword id="KW-0808">Transferase</keyword>
<evidence type="ECO:0000255" key="1">
    <source>
        <dbReference type="HAMAP-Rule" id="MF_00607"/>
    </source>
</evidence>
<feature type="chain" id="PRO_1000194388" description="Ribosomal RNA small subunit methyltransferase A">
    <location>
        <begin position="1"/>
        <end position="296"/>
    </location>
</feature>
<feature type="binding site" evidence="1">
    <location>
        <position position="30"/>
    </location>
    <ligand>
        <name>S-adenosyl-L-methionine</name>
        <dbReference type="ChEBI" id="CHEBI:59789"/>
    </ligand>
</feature>
<feature type="binding site" evidence="1">
    <location>
        <position position="32"/>
    </location>
    <ligand>
        <name>S-adenosyl-L-methionine</name>
        <dbReference type="ChEBI" id="CHEBI:59789"/>
    </ligand>
</feature>
<feature type="binding site" evidence="1">
    <location>
        <position position="57"/>
    </location>
    <ligand>
        <name>S-adenosyl-L-methionine</name>
        <dbReference type="ChEBI" id="CHEBI:59789"/>
    </ligand>
</feature>
<feature type="binding site" evidence="1">
    <location>
        <position position="78"/>
    </location>
    <ligand>
        <name>S-adenosyl-L-methionine</name>
        <dbReference type="ChEBI" id="CHEBI:59789"/>
    </ligand>
</feature>
<feature type="binding site" evidence="1">
    <location>
        <position position="103"/>
    </location>
    <ligand>
        <name>S-adenosyl-L-methionine</name>
        <dbReference type="ChEBI" id="CHEBI:59789"/>
    </ligand>
</feature>
<feature type="binding site" evidence="1">
    <location>
        <position position="128"/>
    </location>
    <ligand>
        <name>S-adenosyl-L-methionine</name>
        <dbReference type="ChEBI" id="CHEBI:59789"/>
    </ligand>
</feature>
<protein>
    <recommendedName>
        <fullName evidence="1">Ribosomal RNA small subunit methyltransferase A</fullName>
        <ecNumber evidence="1">2.1.1.182</ecNumber>
    </recommendedName>
    <alternativeName>
        <fullName evidence="1">16S rRNA (adenine(1518)-N(6)/adenine(1519)-N(6))-dimethyltransferase</fullName>
    </alternativeName>
    <alternativeName>
        <fullName evidence="1">16S rRNA dimethyladenosine transferase</fullName>
    </alternativeName>
    <alternativeName>
        <fullName evidence="1">16S rRNA dimethylase</fullName>
    </alternativeName>
    <alternativeName>
        <fullName evidence="1">S-adenosylmethionine-6-N', N'-adenosyl(rRNA) dimethyltransferase</fullName>
    </alternativeName>
</protein>
<sequence length="296" mass="33374">MEYNDIATPTRTKQLLDQYGFKFKKSLGQNFLVDTNVIRNIIEAAGIDKTSGVIEIGPGMGSLTEQLAKHAKQVLAFEIDQRLIPILGETLSPYDNVTVINEDILKADVASAIETYLHHCDEIFVVANLPYYITTPILMGLLEKNLNINSYVVMMQKEVGERLSAIPSTKAYGSLSIAVQYYTDVKRIMVVPKGVFMPPPNVDSLVVKLTTLERPRVDVEDENLFFKLTRGAFVQRRKTILNNYMSLIQDSKEHKSRIIEWLEASGVAPSRRGESLNLNDYAQLSNNMKKYPELVI</sequence>
<comment type="function">
    <text evidence="1">Specifically dimethylates two adjacent adenosines (A1518 and A1519) in the loop of a conserved hairpin near the 3'-end of 16S rRNA in the 30S particle. May play a critical role in biogenesis of 30S subunits.</text>
</comment>
<comment type="catalytic activity">
    <reaction evidence="1">
        <text>adenosine(1518)/adenosine(1519) in 16S rRNA + 4 S-adenosyl-L-methionine = N(6)-dimethyladenosine(1518)/N(6)-dimethyladenosine(1519) in 16S rRNA + 4 S-adenosyl-L-homocysteine + 4 H(+)</text>
        <dbReference type="Rhea" id="RHEA:19609"/>
        <dbReference type="Rhea" id="RHEA-COMP:10232"/>
        <dbReference type="Rhea" id="RHEA-COMP:10233"/>
        <dbReference type="ChEBI" id="CHEBI:15378"/>
        <dbReference type="ChEBI" id="CHEBI:57856"/>
        <dbReference type="ChEBI" id="CHEBI:59789"/>
        <dbReference type="ChEBI" id="CHEBI:74411"/>
        <dbReference type="ChEBI" id="CHEBI:74493"/>
        <dbReference type="EC" id="2.1.1.182"/>
    </reaction>
</comment>
<comment type="subcellular location">
    <subcellularLocation>
        <location evidence="1">Cytoplasm</location>
    </subcellularLocation>
</comment>
<comment type="similarity">
    <text evidence="1">Belongs to the class I-like SAM-binding methyltransferase superfamily. rRNA adenine N(6)-methyltransferase family. RsmA subfamily.</text>
</comment>
<proteinExistence type="inferred from homology"/>
<gene>
    <name evidence="1" type="primary">rsmA</name>
    <name evidence="1" type="synonym">ksgA</name>
    <name type="ordered locus">MCCL_1919</name>
</gene>
<name>RSMA_MACCJ</name>